<reference key="1">
    <citation type="journal article" date="2010" name="J. Bacteriol.">
        <title>Complete genome sequence of the aerobic facultative methanotroph Methylocella silvestris BL2.</title>
        <authorList>
            <person name="Chen Y."/>
            <person name="Crombie A."/>
            <person name="Rahman M.T."/>
            <person name="Dedysh S.N."/>
            <person name="Liesack W."/>
            <person name="Stott M.B."/>
            <person name="Alam M."/>
            <person name="Theisen A.R."/>
            <person name="Murrell J.C."/>
            <person name="Dunfield P.F."/>
        </authorList>
    </citation>
    <scope>NUCLEOTIDE SEQUENCE [LARGE SCALE GENOMIC DNA]</scope>
    <source>
        <strain>DSM 15510 / CIP 108128 / LMG 27833 / NCIMB 13906 / BL2</strain>
    </source>
</reference>
<sequence>MALKTFNPVTPSLRQLVIVDRSDLYKGKPLKQLTEGKSSSGGRNNNGRITVRFRGGGHKQTYRIIDFKRRKLDVAAKVERIEYDPNRTSFIALIRYADGEQSYIIAPQRLSVGDEVVSSQQADVKPGNAMPLASMPVGTIVHNIEMKIGKGGAMVRSAGTFAQVVGRDQGYVIIRLNSGEQRLIHGQCFATVGAVSNPDHMNASIGKAGRSRWLGRRPHNRGVTMNPVDHPHGGGEGRTSGGRHPVTPWGKPTKGKKTRSNKSTTKFIVTSRHKSKKKG</sequence>
<gene>
    <name evidence="1" type="primary">rplB</name>
    <name type="ordered locus">Msil_0577</name>
</gene>
<comment type="function">
    <text evidence="1">One of the primary rRNA binding proteins. Required for association of the 30S and 50S subunits to form the 70S ribosome, for tRNA binding and peptide bond formation. It has been suggested to have peptidyltransferase activity; this is somewhat controversial. Makes several contacts with the 16S rRNA in the 70S ribosome.</text>
</comment>
<comment type="subunit">
    <text evidence="1">Part of the 50S ribosomal subunit. Forms a bridge to the 30S subunit in the 70S ribosome.</text>
</comment>
<comment type="similarity">
    <text evidence="1">Belongs to the universal ribosomal protein uL2 family.</text>
</comment>
<keyword id="KW-1185">Reference proteome</keyword>
<keyword id="KW-0687">Ribonucleoprotein</keyword>
<keyword id="KW-0689">Ribosomal protein</keyword>
<keyword id="KW-0694">RNA-binding</keyword>
<keyword id="KW-0699">rRNA-binding</keyword>
<organism>
    <name type="scientific">Methylocella silvestris (strain DSM 15510 / CIP 108128 / LMG 27833 / NCIMB 13906 / BL2)</name>
    <dbReference type="NCBI Taxonomy" id="395965"/>
    <lineage>
        <taxon>Bacteria</taxon>
        <taxon>Pseudomonadati</taxon>
        <taxon>Pseudomonadota</taxon>
        <taxon>Alphaproteobacteria</taxon>
        <taxon>Hyphomicrobiales</taxon>
        <taxon>Beijerinckiaceae</taxon>
        <taxon>Methylocella</taxon>
    </lineage>
</organism>
<evidence type="ECO:0000255" key="1">
    <source>
        <dbReference type="HAMAP-Rule" id="MF_01320"/>
    </source>
</evidence>
<evidence type="ECO:0000256" key="2">
    <source>
        <dbReference type="SAM" id="MobiDB-lite"/>
    </source>
</evidence>
<evidence type="ECO:0000305" key="3"/>
<accession>B8ELG0</accession>
<dbReference type="EMBL" id="CP001280">
    <property type="protein sequence ID" value="ACK49549.1"/>
    <property type="molecule type" value="Genomic_DNA"/>
</dbReference>
<dbReference type="RefSeq" id="WP_012589619.1">
    <property type="nucleotide sequence ID" value="NC_011666.1"/>
</dbReference>
<dbReference type="SMR" id="B8ELG0"/>
<dbReference type="STRING" id="395965.Msil_0577"/>
<dbReference type="KEGG" id="msl:Msil_0577"/>
<dbReference type="eggNOG" id="COG0090">
    <property type="taxonomic scope" value="Bacteria"/>
</dbReference>
<dbReference type="HOGENOM" id="CLU_036235_2_1_5"/>
<dbReference type="OrthoDB" id="9778722at2"/>
<dbReference type="Proteomes" id="UP000002257">
    <property type="component" value="Chromosome"/>
</dbReference>
<dbReference type="GO" id="GO:0015934">
    <property type="term" value="C:large ribosomal subunit"/>
    <property type="evidence" value="ECO:0007669"/>
    <property type="project" value="InterPro"/>
</dbReference>
<dbReference type="GO" id="GO:0019843">
    <property type="term" value="F:rRNA binding"/>
    <property type="evidence" value="ECO:0007669"/>
    <property type="project" value="UniProtKB-UniRule"/>
</dbReference>
<dbReference type="GO" id="GO:0003735">
    <property type="term" value="F:structural constituent of ribosome"/>
    <property type="evidence" value="ECO:0007669"/>
    <property type="project" value="InterPro"/>
</dbReference>
<dbReference type="GO" id="GO:0016740">
    <property type="term" value="F:transferase activity"/>
    <property type="evidence" value="ECO:0007669"/>
    <property type="project" value="InterPro"/>
</dbReference>
<dbReference type="GO" id="GO:0002181">
    <property type="term" value="P:cytoplasmic translation"/>
    <property type="evidence" value="ECO:0007669"/>
    <property type="project" value="TreeGrafter"/>
</dbReference>
<dbReference type="FunFam" id="2.30.30.30:FF:000055">
    <property type="entry name" value="50S ribosomal protein L2"/>
    <property type="match status" value="1"/>
</dbReference>
<dbReference type="FunFam" id="2.40.50.140:FF:000003">
    <property type="entry name" value="50S ribosomal protein L2"/>
    <property type="match status" value="1"/>
</dbReference>
<dbReference type="FunFam" id="4.10.950.10:FF:000001">
    <property type="entry name" value="50S ribosomal protein L2"/>
    <property type="match status" value="1"/>
</dbReference>
<dbReference type="Gene3D" id="2.30.30.30">
    <property type="match status" value="1"/>
</dbReference>
<dbReference type="Gene3D" id="2.40.50.140">
    <property type="entry name" value="Nucleic acid-binding proteins"/>
    <property type="match status" value="1"/>
</dbReference>
<dbReference type="Gene3D" id="4.10.950.10">
    <property type="entry name" value="Ribosomal protein L2, domain 3"/>
    <property type="match status" value="1"/>
</dbReference>
<dbReference type="HAMAP" id="MF_01320_B">
    <property type="entry name" value="Ribosomal_uL2_B"/>
    <property type="match status" value="1"/>
</dbReference>
<dbReference type="InterPro" id="IPR012340">
    <property type="entry name" value="NA-bd_OB-fold"/>
</dbReference>
<dbReference type="InterPro" id="IPR014722">
    <property type="entry name" value="Rib_uL2_dom2"/>
</dbReference>
<dbReference type="InterPro" id="IPR002171">
    <property type="entry name" value="Ribosomal_uL2"/>
</dbReference>
<dbReference type="InterPro" id="IPR005880">
    <property type="entry name" value="Ribosomal_uL2_bac/org-type"/>
</dbReference>
<dbReference type="InterPro" id="IPR022669">
    <property type="entry name" value="Ribosomal_uL2_C"/>
</dbReference>
<dbReference type="InterPro" id="IPR022671">
    <property type="entry name" value="Ribosomal_uL2_CS"/>
</dbReference>
<dbReference type="InterPro" id="IPR014726">
    <property type="entry name" value="Ribosomal_uL2_dom3"/>
</dbReference>
<dbReference type="InterPro" id="IPR022666">
    <property type="entry name" value="Ribosomal_uL2_RNA-bd_dom"/>
</dbReference>
<dbReference type="InterPro" id="IPR008991">
    <property type="entry name" value="Translation_prot_SH3-like_sf"/>
</dbReference>
<dbReference type="NCBIfam" id="TIGR01171">
    <property type="entry name" value="rplB_bact"/>
    <property type="match status" value="1"/>
</dbReference>
<dbReference type="PANTHER" id="PTHR13691:SF5">
    <property type="entry name" value="LARGE RIBOSOMAL SUBUNIT PROTEIN UL2M"/>
    <property type="match status" value="1"/>
</dbReference>
<dbReference type="PANTHER" id="PTHR13691">
    <property type="entry name" value="RIBOSOMAL PROTEIN L2"/>
    <property type="match status" value="1"/>
</dbReference>
<dbReference type="Pfam" id="PF00181">
    <property type="entry name" value="Ribosomal_L2"/>
    <property type="match status" value="1"/>
</dbReference>
<dbReference type="Pfam" id="PF03947">
    <property type="entry name" value="Ribosomal_L2_C"/>
    <property type="match status" value="1"/>
</dbReference>
<dbReference type="PIRSF" id="PIRSF002158">
    <property type="entry name" value="Ribosomal_L2"/>
    <property type="match status" value="1"/>
</dbReference>
<dbReference type="SMART" id="SM01383">
    <property type="entry name" value="Ribosomal_L2"/>
    <property type="match status" value="1"/>
</dbReference>
<dbReference type="SMART" id="SM01382">
    <property type="entry name" value="Ribosomal_L2_C"/>
    <property type="match status" value="1"/>
</dbReference>
<dbReference type="SUPFAM" id="SSF50249">
    <property type="entry name" value="Nucleic acid-binding proteins"/>
    <property type="match status" value="1"/>
</dbReference>
<dbReference type="SUPFAM" id="SSF50104">
    <property type="entry name" value="Translation proteins SH3-like domain"/>
    <property type="match status" value="1"/>
</dbReference>
<dbReference type="PROSITE" id="PS00467">
    <property type="entry name" value="RIBOSOMAL_L2"/>
    <property type="match status" value="1"/>
</dbReference>
<name>RL2_METSB</name>
<protein>
    <recommendedName>
        <fullName evidence="1">Large ribosomal subunit protein uL2</fullName>
    </recommendedName>
    <alternativeName>
        <fullName evidence="3">50S ribosomal protein L2</fullName>
    </alternativeName>
</protein>
<feature type="chain" id="PRO_1000165759" description="Large ribosomal subunit protein uL2">
    <location>
        <begin position="1"/>
        <end position="279"/>
    </location>
</feature>
<feature type="region of interest" description="Disordered" evidence="2">
    <location>
        <begin position="202"/>
        <end position="279"/>
    </location>
</feature>
<feature type="compositionally biased region" description="Basic residues" evidence="2">
    <location>
        <begin position="209"/>
        <end position="220"/>
    </location>
</feature>
<proteinExistence type="inferred from homology"/>